<evidence type="ECO:0000250" key="1"/>
<evidence type="ECO:0000256" key="2">
    <source>
        <dbReference type="SAM" id="MobiDB-lite"/>
    </source>
</evidence>
<evidence type="ECO:0000305" key="3"/>
<comment type="function">
    <text evidence="1">One of the essential components for the initiation of protein synthesis. Protects formylmethionyl-tRNA from spontaneous hydrolysis and promotes its binding to the 30S ribosomal subunits. Also involved in the hydrolysis of GTP during the formation of the 70S ribosomal complex (By similarity).</text>
</comment>
<comment type="subcellular location">
    <subcellularLocation>
        <location>Plastid</location>
        <location>Chloroplast</location>
    </subcellularLocation>
</comment>
<comment type="similarity">
    <text evidence="3">Belongs to the TRAFAC class translation factor GTPase superfamily. Classic translation factor GTPase family. IF-2 subfamily.</text>
</comment>
<feature type="chain" id="PRO_0000232592" description="Translation initiation factor IF-2, chloroplastic">
    <location>
        <begin position="1"/>
        <end position="744"/>
    </location>
</feature>
<feature type="domain" description="tr-type G">
    <location>
        <begin position="244"/>
        <end position="417"/>
    </location>
</feature>
<feature type="region of interest" description="Disordered" evidence="2">
    <location>
        <begin position="113"/>
        <end position="146"/>
    </location>
</feature>
<feature type="region of interest" description="G1" evidence="1">
    <location>
        <begin position="253"/>
        <end position="260"/>
    </location>
</feature>
<feature type="region of interest" description="G2" evidence="1">
    <location>
        <begin position="278"/>
        <end position="282"/>
    </location>
</feature>
<feature type="region of interest" description="G3" evidence="1">
    <location>
        <begin position="303"/>
        <end position="306"/>
    </location>
</feature>
<feature type="region of interest" description="G4" evidence="1">
    <location>
        <begin position="357"/>
        <end position="360"/>
    </location>
</feature>
<feature type="region of interest" description="G5" evidence="1">
    <location>
        <begin position="393"/>
        <end position="395"/>
    </location>
</feature>
<feature type="compositionally biased region" description="Basic residues" evidence="2">
    <location>
        <begin position="121"/>
        <end position="134"/>
    </location>
</feature>
<feature type="binding site" evidence="1">
    <location>
        <begin position="253"/>
        <end position="260"/>
    </location>
    <ligand>
        <name>GTP</name>
        <dbReference type="ChEBI" id="CHEBI:37565"/>
    </ligand>
</feature>
<feature type="binding site" evidence="1">
    <location>
        <begin position="303"/>
        <end position="307"/>
    </location>
    <ligand>
        <name>GTP</name>
        <dbReference type="ChEBI" id="CHEBI:37565"/>
    </ligand>
</feature>
<feature type="binding site" evidence="1">
    <location>
        <begin position="357"/>
        <end position="360"/>
    </location>
    <ligand>
        <name>GTP</name>
        <dbReference type="ChEBI" id="CHEBI:37565"/>
    </ligand>
</feature>
<dbReference type="EMBL" id="AY673996">
    <property type="protein sequence ID" value="AAT79713.1"/>
    <property type="molecule type" value="Genomic_DNA"/>
</dbReference>
<dbReference type="RefSeq" id="YP_063638.1">
    <property type="nucleotide sequence ID" value="NC_006137.1"/>
</dbReference>
<dbReference type="SMR" id="Q6B8S2"/>
<dbReference type="GeneID" id="2943949"/>
<dbReference type="GO" id="GO:0009507">
    <property type="term" value="C:chloroplast"/>
    <property type="evidence" value="ECO:0007669"/>
    <property type="project" value="UniProtKB-SubCell"/>
</dbReference>
<dbReference type="GO" id="GO:0005525">
    <property type="term" value="F:GTP binding"/>
    <property type="evidence" value="ECO:0007669"/>
    <property type="project" value="UniProtKB-KW"/>
</dbReference>
<dbReference type="GO" id="GO:0003924">
    <property type="term" value="F:GTPase activity"/>
    <property type="evidence" value="ECO:0007669"/>
    <property type="project" value="UniProtKB-UniRule"/>
</dbReference>
<dbReference type="GO" id="GO:0003743">
    <property type="term" value="F:translation initiation factor activity"/>
    <property type="evidence" value="ECO:0007669"/>
    <property type="project" value="UniProtKB-UniRule"/>
</dbReference>
<dbReference type="CDD" id="cd01887">
    <property type="entry name" value="IF2_eIF5B"/>
    <property type="match status" value="1"/>
</dbReference>
<dbReference type="CDD" id="cd03702">
    <property type="entry name" value="IF2_mtIF2_II"/>
    <property type="match status" value="1"/>
</dbReference>
<dbReference type="CDD" id="cd03692">
    <property type="entry name" value="mtIF2_IVc"/>
    <property type="match status" value="1"/>
</dbReference>
<dbReference type="FunFam" id="2.40.30.10:FF:000008">
    <property type="entry name" value="Translation initiation factor IF-2"/>
    <property type="match status" value="1"/>
</dbReference>
<dbReference type="FunFam" id="3.40.50.10050:FF:000001">
    <property type="entry name" value="Translation initiation factor IF-2"/>
    <property type="match status" value="1"/>
</dbReference>
<dbReference type="FunFam" id="3.40.50.300:FF:000019">
    <property type="entry name" value="Translation initiation factor IF-2"/>
    <property type="match status" value="1"/>
</dbReference>
<dbReference type="Gene3D" id="3.40.50.300">
    <property type="entry name" value="P-loop containing nucleotide triphosphate hydrolases"/>
    <property type="match status" value="1"/>
</dbReference>
<dbReference type="Gene3D" id="2.40.30.10">
    <property type="entry name" value="Translation factors"/>
    <property type="match status" value="2"/>
</dbReference>
<dbReference type="Gene3D" id="3.40.50.10050">
    <property type="entry name" value="Translation initiation factor IF- 2, domain 3"/>
    <property type="match status" value="1"/>
</dbReference>
<dbReference type="HAMAP" id="MF_00100_B">
    <property type="entry name" value="IF_2_B"/>
    <property type="match status" value="1"/>
</dbReference>
<dbReference type="InterPro" id="IPR053905">
    <property type="entry name" value="EF-G-like_DII"/>
</dbReference>
<dbReference type="InterPro" id="IPR044145">
    <property type="entry name" value="IF2_II"/>
</dbReference>
<dbReference type="InterPro" id="IPR006847">
    <property type="entry name" value="IF2_N"/>
</dbReference>
<dbReference type="InterPro" id="IPR027417">
    <property type="entry name" value="P-loop_NTPase"/>
</dbReference>
<dbReference type="InterPro" id="IPR005225">
    <property type="entry name" value="Small_GTP-bd"/>
</dbReference>
<dbReference type="InterPro" id="IPR000795">
    <property type="entry name" value="T_Tr_GTP-bd_dom"/>
</dbReference>
<dbReference type="InterPro" id="IPR000178">
    <property type="entry name" value="TF_IF2_bacterial-like"/>
</dbReference>
<dbReference type="InterPro" id="IPR015760">
    <property type="entry name" value="TIF_IF2"/>
</dbReference>
<dbReference type="InterPro" id="IPR023115">
    <property type="entry name" value="TIF_IF2_dom3"/>
</dbReference>
<dbReference type="InterPro" id="IPR036925">
    <property type="entry name" value="TIF_IF2_dom3_sf"/>
</dbReference>
<dbReference type="InterPro" id="IPR009000">
    <property type="entry name" value="Transl_B-barrel_sf"/>
</dbReference>
<dbReference type="NCBIfam" id="TIGR00487">
    <property type="entry name" value="IF-2"/>
    <property type="match status" value="1"/>
</dbReference>
<dbReference type="NCBIfam" id="TIGR00231">
    <property type="entry name" value="small_GTP"/>
    <property type="match status" value="1"/>
</dbReference>
<dbReference type="PANTHER" id="PTHR43381:SF5">
    <property type="entry name" value="TR-TYPE G DOMAIN-CONTAINING PROTEIN"/>
    <property type="match status" value="1"/>
</dbReference>
<dbReference type="PANTHER" id="PTHR43381">
    <property type="entry name" value="TRANSLATION INITIATION FACTOR IF-2-RELATED"/>
    <property type="match status" value="1"/>
</dbReference>
<dbReference type="Pfam" id="PF22042">
    <property type="entry name" value="EF-G_D2"/>
    <property type="match status" value="1"/>
</dbReference>
<dbReference type="Pfam" id="PF00009">
    <property type="entry name" value="GTP_EFTU"/>
    <property type="match status" value="1"/>
</dbReference>
<dbReference type="Pfam" id="PF11987">
    <property type="entry name" value="IF-2"/>
    <property type="match status" value="1"/>
</dbReference>
<dbReference type="Pfam" id="PF04760">
    <property type="entry name" value="IF2_N"/>
    <property type="match status" value="1"/>
</dbReference>
<dbReference type="PRINTS" id="PR00315">
    <property type="entry name" value="ELONGATNFCT"/>
</dbReference>
<dbReference type="SUPFAM" id="SSF52156">
    <property type="entry name" value="Initiation factor IF2/eIF5b, domain 3"/>
    <property type="match status" value="1"/>
</dbReference>
<dbReference type="SUPFAM" id="SSF52540">
    <property type="entry name" value="P-loop containing nucleoside triphosphate hydrolases"/>
    <property type="match status" value="1"/>
</dbReference>
<dbReference type="SUPFAM" id="SSF50447">
    <property type="entry name" value="Translation proteins"/>
    <property type="match status" value="2"/>
</dbReference>
<dbReference type="PROSITE" id="PS51722">
    <property type="entry name" value="G_TR_2"/>
    <property type="match status" value="1"/>
</dbReference>
<dbReference type="PROSITE" id="PS01176">
    <property type="entry name" value="IF2"/>
    <property type="match status" value="1"/>
</dbReference>
<geneLocation type="chloroplast"/>
<gene>
    <name type="primary">infB</name>
    <name type="ordered locus">Grc000132</name>
</gene>
<protein>
    <recommendedName>
        <fullName>Translation initiation factor IF-2, chloroplastic</fullName>
    </recommendedName>
</protein>
<accession>Q6B8S2</accession>
<reference key="1">
    <citation type="journal article" date="2004" name="J. Mol. Evol.">
        <title>Comparative analysis of the complete plastid genome sequence of the red alga Gracilaria tenuistipitata var. liui provides insights into the evolution of rhodoplasts and their relationship to other plastids.</title>
        <authorList>
            <person name="Hagopian J.C."/>
            <person name="Reis M."/>
            <person name="Kitajima J.P."/>
            <person name="Bhattacharya D."/>
            <person name="de Oliveira M.C."/>
        </authorList>
    </citation>
    <scope>NUCLEOTIDE SEQUENCE [LARGE SCALE GENOMIC DNA]</scope>
</reference>
<name>IF2C_GRATL</name>
<proteinExistence type="inferred from homology"/>
<sequence>MRYSNVIDFSICMSIKSENTFLLENPKFIKNLKFFNIHSSQEPKSPTDIRNSVENSDFNVQLENKLKNSFKQDGKQKSKKKKILSVDLDQEHIFKKKNKSKVIISAPDDLTNNSEGSFKSGKQKKKEKGKHKQNVNKDIHHTKNNRLSNLDPLDDINKDKSVIIDSSLSIEELSIKLKIPPAEIITGLFLKGISVTVNQIIDIAIATQVAQKYNFTVINQNQNNQSELDQSDKLQQVSTITSINRAPIVTILGHVDHGKTTLLDAIRNTNAAGKEIGGITQSIKAYEVNWPYNSSNQKLIFIDTPGHEAFSSMRLRCAQITDIVILIIAADDGLKPQTIEAINYISSKKTPFIVAINKIDKANLNLIRVREELATYNIISTDWGGEIQFIEISALQKRNISQLLTAICSLAEFINLKADPTELVQGSILEAYLDKTKGIVVNIIVLSGTLHIGDIIVSGHSYGRVKKIINSLGNELIQAGPSSILEVLGFYSIPQTGRYFQVVNSEKEAKKMIAQIPLSGITQTTKNILNLNPKVYNHNLNTRSLNLIIKADTQGTIDAIINSFIQISQKKIKLNILTASLGVVSNTDLDLAFSTQALIIAFNINISTNILNAAEKLNLSLRKFVLIYDLVDYVTYSMLDLVDPEYDKILIGQAEVQTTFTINKGTVAGCIVKSGKLKKDALIGVYRKNKLIYEGVINSLKRMKNDVNEVVIGNECGILSKDYHFWQSEDLIKAYELHEKAKTL</sequence>
<organism>
    <name type="scientific">Gracilaria tenuistipitata var. liui</name>
    <name type="common">Red alga</name>
    <dbReference type="NCBI Taxonomy" id="285951"/>
    <lineage>
        <taxon>Eukaryota</taxon>
        <taxon>Rhodophyta</taxon>
        <taxon>Florideophyceae</taxon>
        <taxon>Rhodymeniophycidae</taxon>
        <taxon>Gracilariales</taxon>
        <taxon>Gracilariaceae</taxon>
        <taxon>Gracilaria</taxon>
        <taxon>Gracilaria tenuistipitata</taxon>
    </lineage>
</organism>
<keyword id="KW-0150">Chloroplast</keyword>
<keyword id="KW-0342">GTP-binding</keyword>
<keyword id="KW-0396">Initiation factor</keyword>
<keyword id="KW-0547">Nucleotide-binding</keyword>
<keyword id="KW-0934">Plastid</keyword>
<keyword id="KW-0648">Protein biosynthesis</keyword>